<evidence type="ECO:0000255" key="1">
    <source>
        <dbReference type="HAMAP-Rule" id="MF_01367"/>
    </source>
</evidence>
<evidence type="ECO:0000305" key="2"/>
<accession>Q65P97</accession>
<accession>Q62ZN6</accession>
<gene>
    <name evidence="1" type="primary">rplN</name>
    <name type="ordered locus">BLi00143</name>
    <name type="ordered locus">BL01041</name>
</gene>
<dbReference type="EMBL" id="CP000002">
    <property type="protein sequence ID" value="AAU21772.2"/>
    <property type="molecule type" value="Genomic_DNA"/>
</dbReference>
<dbReference type="EMBL" id="AE017333">
    <property type="protein sequence ID" value="AAU39117.1"/>
    <property type="molecule type" value="Genomic_DNA"/>
</dbReference>
<dbReference type="RefSeq" id="WP_003178347.1">
    <property type="nucleotide sequence ID" value="NC_006322.1"/>
</dbReference>
<dbReference type="SMR" id="Q65P97"/>
<dbReference type="STRING" id="279010.BL01041"/>
<dbReference type="GeneID" id="92858893"/>
<dbReference type="KEGG" id="bld:BLi00143"/>
<dbReference type="KEGG" id="bli:BL01041"/>
<dbReference type="eggNOG" id="COG0093">
    <property type="taxonomic scope" value="Bacteria"/>
</dbReference>
<dbReference type="HOGENOM" id="CLU_095071_2_1_9"/>
<dbReference type="Proteomes" id="UP000000606">
    <property type="component" value="Chromosome"/>
</dbReference>
<dbReference type="GO" id="GO:0022625">
    <property type="term" value="C:cytosolic large ribosomal subunit"/>
    <property type="evidence" value="ECO:0007669"/>
    <property type="project" value="TreeGrafter"/>
</dbReference>
<dbReference type="GO" id="GO:0070180">
    <property type="term" value="F:large ribosomal subunit rRNA binding"/>
    <property type="evidence" value="ECO:0007669"/>
    <property type="project" value="TreeGrafter"/>
</dbReference>
<dbReference type="GO" id="GO:0003735">
    <property type="term" value="F:structural constituent of ribosome"/>
    <property type="evidence" value="ECO:0007669"/>
    <property type="project" value="InterPro"/>
</dbReference>
<dbReference type="GO" id="GO:0006412">
    <property type="term" value="P:translation"/>
    <property type="evidence" value="ECO:0007669"/>
    <property type="project" value="UniProtKB-UniRule"/>
</dbReference>
<dbReference type="CDD" id="cd00337">
    <property type="entry name" value="Ribosomal_uL14"/>
    <property type="match status" value="1"/>
</dbReference>
<dbReference type="FunFam" id="2.40.150.20:FF:000001">
    <property type="entry name" value="50S ribosomal protein L14"/>
    <property type="match status" value="1"/>
</dbReference>
<dbReference type="Gene3D" id="2.40.150.20">
    <property type="entry name" value="Ribosomal protein L14"/>
    <property type="match status" value="1"/>
</dbReference>
<dbReference type="HAMAP" id="MF_01367">
    <property type="entry name" value="Ribosomal_uL14"/>
    <property type="match status" value="1"/>
</dbReference>
<dbReference type="InterPro" id="IPR000218">
    <property type="entry name" value="Ribosomal_uL14"/>
</dbReference>
<dbReference type="InterPro" id="IPR005745">
    <property type="entry name" value="Ribosomal_uL14_bac-type"/>
</dbReference>
<dbReference type="InterPro" id="IPR019972">
    <property type="entry name" value="Ribosomal_uL14_CS"/>
</dbReference>
<dbReference type="InterPro" id="IPR036853">
    <property type="entry name" value="Ribosomal_uL14_sf"/>
</dbReference>
<dbReference type="NCBIfam" id="TIGR01067">
    <property type="entry name" value="rplN_bact"/>
    <property type="match status" value="1"/>
</dbReference>
<dbReference type="PANTHER" id="PTHR11761">
    <property type="entry name" value="50S/60S RIBOSOMAL PROTEIN L14/L23"/>
    <property type="match status" value="1"/>
</dbReference>
<dbReference type="PANTHER" id="PTHR11761:SF3">
    <property type="entry name" value="LARGE RIBOSOMAL SUBUNIT PROTEIN UL14M"/>
    <property type="match status" value="1"/>
</dbReference>
<dbReference type="Pfam" id="PF00238">
    <property type="entry name" value="Ribosomal_L14"/>
    <property type="match status" value="1"/>
</dbReference>
<dbReference type="SMART" id="SM01374">
    <property type="entry name" value="Ribosomal_L14"/>
    <property type="match status" value="1"/>
</dbReference>
<dbReference type="SUPFAM" id="SSF50193">
    <property type="entry name" value="Ribosomal protein L14"/>
    <property type="match status" value="1"/>
</dbReference>
<dbReference type="PROSITE" id="PS00049">
    <property type="entry name" value="RIBOSOMAL_L14"/>
    <property type="match status" value="1"/>
</dbReference>
<name>RL14_BACLD</name>
<comment type="function">
    <text evidence="1">Binds to 23S rRNA. Forms part of two intersubunit bridges in the 70S ribosome.</text>
</comment>
<comment type="subunit">
    <text evidence="1">Part of the 50S ribosomal subunit. Forms a cluster with proteins L3 and L19. In the 70S ribosome, L14 and L19 interact and together make contacts with the 16S rRNA in bridges B5 and B8.</text>
</comment>
<comment type="similarity">
    <text evidence="1">Belongs to the universal ribosomal protein uL14 family.</text>
</comment>
<organism>
    <name type="scientific">Bacillus licheniformis (strain ATCC 14580 / DSM 13 / JCM 2505 / CCUG 7422 / NBRC 12200 / NCIMB 9375 / NCTC 10341 / NRRL NRS-1264 / Gibson 46)</name>
    <dbReference type="NCBI Taxonomy" id="279010"/>
    <lineage>
        <taxon>Bacteria</taxon>
        <taxon>Bacillati</taxon>
        <taxon>Bacillota</taxon>
        <taxon>Bacilli</taxon>
        <taxon>Bacillales</taxon>
        <taxon>Bacillaceae</taxon>
        <taxon>Bacillus</taxon>
    </lineage>
</organism>
<feature type="chain" id="PRO_1000055517" description="Large ribosomal subunit protein uL14">
    <location>
        <begin position="1"/>
        <end position="122"/>
    </location>
</feature>
<keyword id="KW-1185">Reference proteome</keyword>
<keyword id="KW-0687">Ribonucleoprotein</keyword>
<keyword id="KW-0689">Ribosomal protein</keyword>
<keyword id="KW-0694">RNA-binding</keyword>
<keyword id="KW-0699">rRNA-binding</keyword>
<protein>
    <recommendedName>
        <fullName evidence="1">Large ribosomal subunit protein uL14</fullName>
    </recommendedName>
    <alternativeName>
        <fullName evidence="2">50S ribosomal protein L14</fullName>
    </alternativeName>
</protein>
<proteinExistence type="inferred from homology"/>
<reference key="1">
    <citation type="journal article" date="2004" name="J. Mol. Microbiol. Biotechnol.">
        <title>The complete genome sequence of Bacillus licheniformis DSM13, an organism with great industrial potential.</title>
        <authorList>
            <person name="Veith B."/>
            <person name="Herzberg C."/>
            <person name="Steckel S."/>
            <person name="Feesche J."/>
            <person name="Maurer K.H."/>
            <person name="Ehrenreich P."/>
            <person name="Baeumer S."/>
            <person name="Henne A."/>
            <person name="Liesegang H."/>
            <person name="Merkl R."/>
            <person name="Ehrenreich A."/>
            <person name="Gottschalk G."/>
        </authorList>
    </citation>
    <scope>NUCLEOTIDE SEQUENCE [LARGE SCALE GENOMIC DNA]</scope>
    <source>
        <strain>ATCC 14580 / DSM 13 / JCM 2505 / CCUG 7422 / NBRC 12200 / NCIMB 9375 / NCTC 10341 / NRRL NRS-1264 / Gibson 46</strain>
    </source>
</reference>
<reference key="2">
    <citation type="journal article" date="2004" name="Genome Biol.">
        <title>Complete genome sequence of the industrial bacterium Bacillus licheniformis and comparisons with closely related Bacillus species.</title>
        <authorList>
            <person name="Rey M.W."/>
            <person name="Ramaiya P."/>
            <person name="Nelson B.A."/>
            <person name="Brody-Karpin S.D."/>
            <person name="Zaretsky E.J."/>
            <person name="Tang M."/>
            <person name="Lopez de Leon A."/>
            <person name="Xiang H."/>
            <person name="Gusti V."/>
            <person name="Clausen I.G."/>
            <person name="Olsen P.B."/>
            <person name="Rasmussen M.D."/>
            <person name="Andersen J.T."/>
            <person name="Joergensen P.L."/>
            <person name="Larsen T.S."/>
            <person name="Sorokin A."/>
            <person name="Bolotin A."/>
            <person name="Lapidus A."/>
            <person name="Galleron N."/>
            <person name="Ehrlich S.D."/>
            <person name="Berka R.M."/>
        </authorList>
    </citation>
    <scope>NUCLEOTIDE SEQUENCE [LARGE SCALE GENOMIC DNA]</scope>
    <source>
        <strain>ATCC 14580 / DSM 13 / JCM 2505 / CCUG 7422 / NBRC 12200 / NCIMB 9375 / NCTC 10341 / NRRL NRS-1264 / Gibson 46</strain>
    </source>
</reference>
<sequence>MIQQETRLKVADNSGAREVLTIKVLGGSGRKTANIGDVIVCTVKQATPGGVVKKGDVVRAVVVRSKSGARRNDGSYIKFDENACVIIRDDKSPRGTRIFGPVARELRDNNFMKIVSLAPEVL</sequence>